<proteinExistence type="inferred from homology"/>
<protein>
    <recommendedName>
        <fullName evidence="1">Large ribosomal subunit protein bL33</fullName>
    </recommendedName>
    <alternativeName>
        <fullName evidence="2">50S ribosomal protein L33</fullName>
    </alternativeName>
</protein>
<accession>Q8A9A0</accession>
<keyword id="KW-1185">Reference proteome</keyword>
<keyword id="KW-0687">Ribonucleoprotein</keyword>
<keyword id="KW-0689">Ribosomal protein</keyword>
<feature type="chain" id="PRO_1000059270" description="Large ribosomal subunit protein bL33">
    <location>
        <begin position="1"/>
        <end position="62"/>
    </location>
</feature>
<organism>
    <name type="scientific">Bacteroides thetaiotaomicron (strain ATCC 29148 / DSM 2079 / JCM 5827 / CCUG 10774 / NCTC 10582 / VPI-5482 / E50)</name>
    <dbReference type="NCBI Taxonomy" id="226186"/>
    <lineage>
        <taxon>Bacteria</taxon>
        <taxon>Pseudomonadati</taxon>
        <taxon>Bacteroidota</taxon>
        <taxon>Bacteroidia</taxon>
        <taxon>Bacteroidales</taxon>
        <taxon>Bacteroidaceae</taxon>
        <taxon>Bacteroides</taxon>
    </lineage>
</organism>
<name>RL33_BACTN</name>
<evidence type="ECO:0000255" key="1">
    <source>
        <dbReference type="HAMAP-Rule" id="MF_00294"/>
    </source>
</evidence>
<evidence type="ECO:0000305" key="2"/>
<sequence length="62" mass="7226">MAKKAKGNRVQVILECTEHKESGMPGTSRYITTKNRKNTTERLELKKYNPILKRVTVHKEIK</sequence>
<comment type="similarity">
    <text evidence="1">Belongs to the bacterial ribosomal protein bL33 family.</text>
</comment>
<gene>
    <name evidence="1" type="primary">rpmG</name>
    <name type="ordered locus">BT_0915</name>
</gene>
<dbReference type="EMBL" id="AE015928">
    <property type="protein sequence ID" value="AAO76022.1"/>
    <property type="molecule type" value="Genomic_DNA"/>
</dbReference>
<dbReference type="RefSeq" id="NP_809828.1">
    <property type="nucleotide sequence ID" value="NC_004663.1"/>
</dbReference>
<dbReference type="RefSeq" id="WP_008761579.1">
    <property type="nucleotide sequence ID" value="NZ_UYXG01000013.1"/>
</dbReference>
<dbReference type="SMR" id="Q8A9A0"/>
<dbReference type="FunCoup" id="Q8A9A0">
    <property type="interactions" value="484"/>
</dbReference>
<dbReference type="STRING" id="226186.BT_0915"/>
<dbReference type="PaxDb" id="226186-BT_0915"/>
<dbReference type="EnsemblBacteria" id="AAO76022">
    <property type="protein sequence ID" value="AAO76022"/>
    <property type="gene ID" value="BT_0915"/>
</dbReference>
<dbReference type="GeneID" id="69590285"/>
<dbReference type="KEGG" id="bth:BT_0915"/>
<dbReference type="PATRIC" id="fig|226186.12.peg.928"/>
<dbReference type="eggNOG" id="COG0267">
    <property type="taxonomic scope" value="Bacteria"/>
</dbReference>
<dbReference type="HOGENOM" id="CLU_190949_3_0_10"/>
<dbReference type="InParanoid" id="Q8A9A0"/>
<dbReference type="OrthoDB" id="9801333at2"/>
<dbReference type="Proteomes" id="UP000001414">
    <property type="component" value="Chromosome"/>
</dbReference>
<dbReference type="GO" id="GO:0005737">
    <property type="term" value="C:cytoplasm"/>
    <property type="evidence" value="ECO:0007669"/>
    <property type="project" value="UniProtKB-ARBA"/>
</dbReference>
<dbReference type="GO" id="GO:1990904">
    <property type="term" value="C:ribonucleoprotein complex"/>
    <property type="evidence" value="ECO:0007669"/>
    <property type="project" value="UniProtKB-KW"/>
</dbReference>
<dbReference type="GO" id="GO:0005840">
    <property type="term" value="C:ribosome"/>
    <property type="evidence" value="ECO:0007669"/>
    <property type="project" value="UniProtKB-KW"/>
</dbReference>
<dbReference type="GO" id="GO:0003735">
    <property type="term" value="F:structural constituent of ribosome"/>
    <property type="evidence" value="ECO:0007669"/>
    <property type="project" value="InterPro"/>
</dbReference>
<dbReference type="GO" id="GO:0006412">
    <property type="term" value="P:translation"/>
    <property type="evidence" value="ECO:0007669"/>
    <property type="project" value="UniProtKB-UniRule"/>
</dbReference>
<dbReference type="Gene3D" id="2.20.28.120">
    <property type="entry name" value="Ribosomal protein L33"/>
    <property type="match status" value="1"/>
</dbReference>
<dbReference type="HAMAP" id="MF_00294">
    <property type="entry name" value="Ribosomal_bL33"/>
    <property type="match status" value="1"/>
</dbReference>
<dbReference type="InterPro" id="IPR001705">
    <property type="entry name" value="Ribosomal_bL33"/>
</dbReference>
<dbReference type="InterPro" id="IPR038584">
    <property type="entry name" value="Ribosomal_bL33_sf"/>
</dbReference>
<dbReference type="InterPro" id="IPR011332">
    <property type="entry name" value="Ribosomal_zn-bd"/>
</dbReference>
<dbReference type="NCBIfam" id="NF001764">
    <property type="entry name" value="PRK00504.1"/>
    <property type="match status" value="1"/>
</dbReference>
<dbReference type="NCBIfam" id="NF001860">
    <property type="entry name" value="PRK00595.1"/>
    <property type="match status" value="1"/>
</dbReference>
<dbReference type="NCBIfam" id="TIGR01023">
    <property type="entry name" value="rpmG_bact"/>
    <property type="match status" value="1"/>
</dbReference>
<dbReference type="PANTHER" id="PTHR43168">
    <property type="entry name" value="50S RIBOSOMAL PROTEIN L33, CHLOROPLASTIC"/>
    <property type="match status" value="1"/>
</dbReference>
<dbReference type="PANTHER" id="PTHR43168:SF2">
    <property type="entry name" value="LARGE RIBOSOMAL SUBUNIT PROTEIN BL33C"/>
    <property type="match status" value="1"/>
</dbReference>
<dbReference type="Pfam" id="PF00471">
    <property type="entry name" value="Ribosomal_L33"/>
    <property type="match status" value="1"/>
</dbReference>
<dbReference type="SUPFAM" id="SSF57829">
    <property type="entry name" value="Zn-binding ribosomal proteins"/>
    <property type="match status" value="1"/>
</dbReference>
<reference key="1">
    <citation type="journal article" date="2003" name="Science">
        <title>A genomic view of the human-Bacteroides thetaiotaomicron symbiosis.</title>
        <authorList>
            <person name="Xu J."/>
            <person name="Bjursell M.K."/>
            <person name="Himrod J."/>
            <person name="Deng S."/>
            <person name="Carmichael L.K."/>
            <person name="Chiang H.C."/>
            <person name="Hooper L.V."/>
            <person name="Gordon J.I."/>
        </authorList>
    </citation>
    <scope>NUCLEOTIDE SEQUENCE [LARGE SCALE GENOMIC DNA]</scope>
    <source>
        <strain>ATCC 29148 / DSM 2079 / JCM 5827 / CCUG 10774 / NCTC 10582 / VPI-5482 / E50</strain>
    </source>
</reference>